<proteinExistence type="inferred from homology"/>
<reference key="1">
    <citation type="journal article" date="2007" name="Proc. Natl. Acad. Sci. U.S.A.">
        <title>The Orientia tsutsugamushi genome reveals massive proliferation of conjugative type IV secretion system and host-cell interaction genes.</title>
        <authorList>
            <person name="Cho N.-H."/>
            <person name="Kim H.-R."/>
            <person name="Lee J.-H."/>
            <person name="Kim S.-Y."/>
            <person name="Kim J."/>
            <person name="Cha S."/>
            <person name="Kim S.-Y."/>
            <person name="Darby A.C."/>
            <person name="Fuxelius H.-H."/>
            <person name="Yin J."/>
            <person name="Kim J.H."/>
            <person name="Kim J."/>
            <person name="Lee S.J."/>
            <person name="Koh Y.-S."/>
            <person name="Jang W.-J."/>
            <person name="Park K.-H."/>
            <person name="Andersson S.G.E."/>
            <person name="Choi M.-S."/>
            <person name="Kim I.-S."/>
        </authorList>
    </citation>
    <scope>NUCLEOTIDE SEQUENCE [LARGE SCALE GENOMIC DNA]</scope>
    <source>
        <strain>Boryong</strain>
    </source>
</reference>
<comment type="function">
    <text evidence="1">Produces ATP from ADP in the presence of a proton gradient across the membrane. The catalytic sites are hosted primarily by the beta subunits.</text>
</comment>
<comment type="catalytic activity">
    <reaction evidence="1">
        <text>ATP + H2O + 4 H(+)(in) = ADP + phosphate + 5 H(+)(out)</text>
        <dbReference type="Rhea" id="RHEA:57720"/>
        <dbReference type="ChEBI" id="CHEBI:15377"/>
        <dbReference type="ChEBI" id="CHEBI:15378"/>
        <dbReference type="ChEBI" id="CHEBI:30616"/>
        <dbReference type="ChEBI" id="CHEBI:43474"/>
        <dbReference type="ChEBI" id="CHEBI:456216"/>
        <dbReference type="EC" id="7.1.2.2"/>
    </reaction>
</comment>
<comment type="subunit">
    <text evidence="1">F-type ATPases have 2 components, CF(1) - the catalytic core - and CF(0) - the membrane proton channel. CF(1) has five subunits: alpha(3), beta(3), gamma(1), delta(1), epsilon(1). CF(0) has three main subunits: a(1), b(2) and c(9-12). The alpha and beta chains form an alternating ring which encloses part of the gamma chain. CF(1) is attached to CF(0) by a central stalk formed by the gamma and epsilon chains, while a peripheral stalk is formed by the delta and b chains.</text>
</comment>
<comment type="subcellular location">
    <subcellularLocation>
        <location evidence="1">Cell inner membrane</location>
        <topology evidence="1">Peripheral membrane protein</topology>
    </subcellularLocation>
</comment>
<comment type="similarity">
    <text evidence="1">Belongs to the ATPase alpha/beta chains family.</text>
</comment>
<feature type="chain" id="PRO_0000339560" description="ATP synthase subunit beta">
    <location>
        <begin position="1"/>
        <end position="478"/>
    </location>
</feature>
<feature type="binding site" evidence="1">
    <location>
        <begin position="160"/>
        <end position="167"/>
    </location>
    <ligand>
        <name>ATP</name>
        <dbReference type="ChEBI" id="CHEBI:30616"/>
    </ligand>
</feature>
<name>ATPB_ORITB</name>
<evidence type="ECO:0000255" key="1">
    <source>
        <dbReference type="HAMAP-Rule" id="MF_01347"/>
    </source>
</evidence>
<keyword id="KW-0066">ATP synthesis</keyword>
<keyword id="KW-0067">ATP-binding</keyword>
<keyword id="KW-0997">Cell inner membrane</keyword>
<keyword id="KW-1003">Cell membrane</keyword>
<keyword id="KW-0139">CF(1)</keyword>
<keyword id="KW-0375">Hydrogen ion transport</keyword>
<keyword id="KW-0406">Ion transport</keyword>
<keyword id="KW-0472">Membrane</keyword>
<keyword id="KW-0547">Nucleotide-binding</keyword>
<keyword id="KW-1185">Reference proteome</keyword>
<keyword id="KW-1278">Translocase</keyword>
<keyword id="KW-0813">Transport</keyword>
<sequence length="478" mass="52013">MKLKAKYKQQSKVGKVVQVVSAVVDVSFAGKDLPHILNALECTINNEKIVLEVLQHIGDDIVRCLAMNSTDGLFRGAEVIDTGEQIKVPVGKSILGRILNVVGQPIDDLGPIKCDNFSQIHKDAPKFINQSTSRKILITGIKVIDLLTPYISGGKIGLFGGAGVGKTVLIMEIINNVAKAYKGYTVFTGVGERTREGGDLYKEMVGSNIIDLNKLENSKVTLVFGQMNEPPGARARVALTGLTIAESFRDMNEGEVLLFIDNIFRFTQAGAEISTLLGRIPSAVGYQPTLATDIGSLQERITSTKFGAITSIQAIYVPADDLTDPAPVACFAHLDATTVLSRKIAELGIYPAVDPLNSSSQILDANVIGQEHYSVATQVQEILQTYKSLQDVIAILGVDELSDDEKRIVSRARKIQRFLTQPFHVAEVFTGKQGRFVSLEDTIYGFKGLIEGKYDDLPEMAFYMVGSIDEAIEKSKTL</sequence>
<protein>
    <recommendedName>
        <fullName evidence="1">ATP synthase subunit beta</fullName>
        <ecNumber evidence="1">7.1.2.2</ecNumber>
    </recommendedName>
    <alternativeName>
        <fullName evidence="1">ATP synthase F1 sector subunit beta</fullName>
    </alternativeName>
    <alternativeName>
        <fullName evidence="1">F-ATPase subunit beta</fullName>
    </alternativeName>
</protein>
<dbReference type="EC" id="7.1.2.2" evidence="1"/>
<dbReference type="EMBL" id="AM494475">
    <property type="protein sequence ID" value="CAM79804.1"/>
    <property type="molecule type" value="Genomic_DNA"/>
</dbReference>
<dbReference type="RefSeq" id="WP_011944630.1">
    <property type="nucleotide sequence ID" value="NC_009488.1"/>
</dbReference>
<dbReference type="SMR" id="A5CDA5"/>
<dbReference type="KEGG" id="ots:OTBS_0738"/>
<dbReference type="eggNOG" id="COG0055">
    <property type="taxonomic scope" value="Bacteria"/>
</dbReference>
<dbReference type="HOGENOM" id="CLU_022398_0_2_5"/>
<dbReference type="Proteomes" id="UP000001565">
    <property type="component" value="Chromosome"/>
</dbReference>
<dbReference type="GO" id="GO:0005886">
    <property type="term" value="C:plasma membrane"/>
    <property type="evidence" value="ECO:0007669"/>
    <property type="project" value="UniProtKB-SubCell"/>
</dbReference>
<dbReference type="GO" id="GO:0045259">
    <property type="term" value="C:proton-transporting ATP synthase complex"/>
    <property type="evidence" value="ECO:0007669"/>
    <property type="project" value="UniProtKB-KW"/>
</dbReference>
<dbReference type="GO" id="GO:0005524">
    <property type="term" value="F:ATP binding"/>
    <property type="evidence" value="ECO:0007669"/>
    <property type="project" value="UniProtKB-UniRule"/>
</dbReference>
<dbReference type="GO" id="GO:0016887">
    <property type="term" value="F:ATP hydrolysis activity"/>
    <property type="evidence" value="ECO:0007669"/>
    <property type="project" value="InterPro"/>
</dbReference>
<dbReference type="GO" id="GO:0046933">
    <property type="term" value="F:proton-transporting ATP synthase activity, rotational mechanism"/>
    <property type="evidence" value="ECO:0007669"/>
    <property type="project" value="UniProtKB-UniRule"/>
</dbReference>
<dbReference type="CDD" id="cd18110">
    <property type="entry name" value="ATP-synt_F1_beta_C"/>
    <property type="match status" value="1"/>
</dbReference>
<dbReference type="CDD" id="cd18115">
    <property type="entry name" value="ATP-synt_F1_beta_N"/>
    <property type="match status" value="1"/>
</dbReference>
<dbReference type="CDD" id="cd01133">
    <property type="entry name" value="F1-ATPase_beta_CD"/>
    <property type="match status" value="1"/>
</dbReference>
<dbReference type="FunFam" id="1.10.1140.10:FF:000001">
    <property type="entry name" value="ATP synthase subunit beta"/>
    <property type="match status" value="1"/>
</dbReference>
<dbReference type="FunFam" id="3.40.50.300:FF:000026">
    <property type="entry name" value="ATP synthase subunit beta"/>
    <property type="match status" value="1"/>
</dbReference>
<dbReference type="Gene3D" id="2.40.10.170">
    <property type="match status" value="1"/>
</dbReference>
<dbReference type="Gene3D" id="1.10.1140.10">
    <property type="entry name" value="Bovine Mitochondrial F1-atpase, Atp Synthase Beta Chain, Chain D, domain 3"/>
    <property type="match status" value="1"/>
</dbReference>
<dbReference type="Gene3D" id="3.40.50.300">
    <property type="entry name" value="P-loop containing nucleotide triphosphate hydrolases"/>
    <property type="match status" value="1"/>
</dbReference>
<dbReference type="HAMAP" id="MF_01347">
    <property type="entry name" value="ATP_synth_beta_bact"/>
    <property type="match status" value="1"/>
</dbReference>
<dbReference type="InterPro" id="IPR003593">
    <property type="entry name" value="AAA+_ATPase"/>
</dbReference>
<dbReference type="InterPro" id="IPR055190">
    <property type="entry name" value="ATP-synt_VA_C"/>
</dbReference>
<dbReference type="InterPro" id="IPR005722">
    <property type="entry name" value="ATP_synth_F1_bsu"/>
</dbReference>
<dbReference type="InterPro" id="IPR020003">
    <property type="entry name" value="ATPase_a/bsu_AS"/>
</dbReference>
<dbReference type="InterPro" id="IPR050053">
    <property type="entry name" value="ATPase_alpha/beta_chains"/>
</dbReference>
<dbReference type="InterPro" id="IPR004100">
    <property type="entry name" value="ATPase_F1/V1/A1_a/bsu_N"/>
</dbReference>
<dbReference type="InterPro" id="IPR036121">
    <property type="entry name" value="ATPase_F1/V1/A1_a/bsu_N_sf"/>
</dbReference>
<dbReference type="InterPro" id="IPR000194">
    <property type="entry name" value="ATPase_F1/V1/A1_a/bsu_nucl-bd"/>
</dbReference>
<dbReference type="InterPro" id="IPR024034">
    <property type="entry name" value="ATPase_F1/V1_b/a_C"/>
</dbReference>
<dbReference type="InterPro" id="IPR027417">
    <property type="entry name" value="P-loop_NTPase"/>
</dbReference>
<dbReference type="NCBIfam" id="TIGR01039">
    <property type="entry name" value="atpD"/>
    <property type="match status" value="1"/>
</dbReference>
<dbReference type="PANTHER" id="PTHR15184">
    <property type="entry name" value="ATP SYNTHASE"/>
    <property type="match status" value="1"/>
</dbReference>
<dbReference type="PANTHER" id="PTHR15184:SF71">
    <property type="entry name" value="ATP SYNTHASE SUBUNIT BETA, MITOCHONDRIAL"/>
    <property type="match status" value="1"/>
</dbReference>
<dbReference type="Pfam" id="PF00006">
    <property type="entry name" value="ATP-synt_ab"/>
    <property type="match status" value="1"/>
</dbReference>
<dbReference type="Pfam" id="PF02874">
    <property type="entry name" value="ATP-synt_ab_N"/>
    <property type="match status" value="1"/>
</dbReference>
<dbReference type="Pfam" id="PF22919">
    <property type="entry name" value="ATP-synt_VA_C"/>
    <property type="match status" value="1"/>
</dbReference>
<dbReference type="SMART" id="SM00382">
    <property type="entry name" value="AAA"/>
    <property type="match status" value="1"/>
</dbReference>
<dbReference type="SUPFAM" id="SSF47917">
    <property type="entry name" value="C-terminal domain of alpha and beta subunits of F1 ATP synthase"/>
    <property type="match status" value="1"/>
</dbReference>
<dbReference type="SUPFAM" id="SSF50615">
    <property type="entry name" value="N-terminal domain of alpha and beta subunits of F1 ATP synthase"/>
    <property type="match status" value="1"/>
</dbReference>
<dbReference type="SUPFAM" id="SSF52540">
    <property type="entry name" value="P-loop containing nucleoside triphosphate hydrolases"/>
    <property type="match status" value="1"/>
</dbReference>
<dbReference type="PROSITE" id="PS00152">
    <property type="entry name" value="ATPASE_ALPHA_BETA"/>
    <property type="match status" value="1"/>
</dbReference>
<accession>A5CDA5</accession>
<organism>
    <name type="scientific">Orientia tsutsugamushi (strain Boryong)</name>
    <name type="common">Rickettsia tsutsugamushi</name>
    <dbReference type="NCBI Taxonomy" id="357244"/>
    <lineage>
        <taxon>Bacteria</taxon>
        <taxon>Pseudomonadati</taxon>
        <taxon>Pseudomonadota</taxon>
        <taxon>Alphaproteobacteria</taxon>
        <taxon>Rickettsiales</taxon>
        <taxon>Rickettsiaceae</taxon>
        <taxon>Rickettsieae</taxon>
        <taxon>Orientia</taxon>
    </lineage>
</organism>
<gene>
    <name evidence="1" type="primary">atpD</name>
    <name type="ordered locus">OTBS_0738</name>
</gene>